<dbReference type="EC" id="2.8.1.13" evidence="1"/>
<dbReference type="EMBL" id="CP000356">
    <property type="protein sequence ID" value="ABF53741.1"/>
    <property type="molecule type" value="Genomic_DNA"/>
</dbReference>
<dbReference type="RefSeq" id="WP_011542317.1">
    <property type="nucleotide sequence ID" value="NC_008048.1"/>
</dbReference>
<dbReference type="SMR" id="Q1GRI1"/>
<dbReference type="STRING" id="317655.Sala_2030"/>
<dbReference type="KEGG" id="sal:Sala_2030"/>
<dbReference type="eggNOG" id="COG0482">
    <property type="taxonomic scope" value="Bacteria"/>
</dbReference>
<dbReference type="HOGENOM" id="CLU_035188_0_1_5"/>
<dbReference type="Proteomes" id="UP000006578">
    <property type="component" value="Chromosome"/>
</dbReference>
<dbReference type="GO" id="GO:0005737">
    <property type="term" value="C:cytoplasm"/>
    <property type="evidence" value="ECO:0007669"/>
    <property type="project" value="UniProtKB-SubCell"/>
</dbReference>
<dbReference type="GO" id="GO:0005524">
    <property type="term" value="F:ATP binding"/>
    <property type="evidence" value="ECO:0007669"/>
    <property type="project" value="UniProtKB-KW"/>
</dbReference>
<dbReference type="GO" id="GO:0000049">
    <property type="term" value="F:tRNA binding"/>
    <property type="evidence" value="ECO:0007669"/>
    <property type="project" value="UniProtKB-KW"/>
</dbReference>
<dbReference type="GO" id="GO:0103016">
    <property type="term" value="F:tRNA-uridine 2-sulfurtransferase activity"/>
    <property type="evidence" value="ECO:0007669"/>
    <property type="project" value="UniProtKB-EC"/>
</dbReference>
<dbReference type="GO" id="GO:0002143">
    <property type="term" value="P:tRNA wobble position uridine thiolation"/>
    <property type="evidence" value="ECO:0007669"/>
    <property type="project" value="TreeGrafter"/>
</dbReference>
<dbReference type="CDD" id="cd01998">
    <property type="entry name" value="MnmA_TRMU-like"/>
    <property type="match status" value="1"/>
</dbReference>
<dbReference type="FunFam" id="2.30.30.280:FF:000001">
    <property type="entry name" value="tRNA-specific 2-thiouridylase MnmA"/>
    <property type="match status" value="1"/>
</dbReference>
<dbReference type="Gene3D" id="2.30.30.280">
    <property type="entry name" value="Adenine nucleotide alpha hydrolases-like domains"/>
    <property type="match status" value="1"/>
</dbReference>
<dbReference type="Gene3D" id="3.40.50.620">
    <property type="entry name" value="HUPs"/>
    <property type="match status" value="1"/>
</dbReference>
<dbReference type="Gene3D" id="2.40.30.10">
    <property type="entry name" value="Translation factors"/>
    <property type="match status" value="1"/>
</dbReference>
<dbReference type="HAMAP" id="MF_00144">
    <property type="entry name" value="tRNA_thiouridyl_MnmA"/>
    <property type="match status" value="1"/>
</dbReference>
<dbReference type="InterPro" id="IPR004506">
    <property type="entry name" value="MnmA-like"/>
</dbReference>
<dbReference type="InterPro" id="IPR046885">
    <property type="entry name" value="MnmA-like_C"/>
</dbReference>
<dbReference type="InterPro" id="IPR046884">
    <property type="entry name" value="MnmA-like_central"/>
</dbReference>
<dbReference type="InterPro" id="IPR023382">
    <property type="entry name" value="MnmA-like_central_sf"/>
</dbReference>
<dbReference type="InterPro" id="IPR014729">
    <property type="entry name" value="Rossmann-like_a/b/a_fold"/>
</dbReference>
<dbReference type="NCBIfam" id="NF001138">
    <property type="entry name" value="PRK00143.1"/>
    <property type="match status" value="1"/>
</dbReference>
<dbReference type="NCBIfam" id="TIGR00420">
    <property type="entry name" value="trmU"/>
    <property type="match status" value="1"/>
</dbReference>
<dbReference type="PANTHER" id="PTHR11933:SF5">
    <property type="entry name" value="MITOCHONDRIAL TRNA-SPECIFIC 2-THIOURIDYLASE 1"/>
    <property type="match status" value="1"/>
</dbReference>
<dbReference type="PANTHER" id="PTHR11933">
    <property type="entry name" value="TRNA 5-METHYLAMINOMETHYL-2-THIOURIDYLATE -METHYLTRANSFERASE"/>
    <property type="match status" value="1"/>
</dbReference>
<dbReference type="Pfam" id="PF03054">
    <property type="entry name" value="tRNA_Me_trans"/>
    <property type="match status" value="1"/>
</dbReference>
<dbReference type="Pfam" id="PF20258">
    <property type="entry name" value="tRNA_Me_trans_C"/>
    <property type="match status" value="1"/>
</dbReference>
<dbReference type="Pfam" id="PF20259">
    <property type="entry name" value="tRNA_Me_trans_M"/>
    <property type="match status" value="1"/>
</dbReference>
<dbReference type="SUPFAM" id="SSF52402">
    <property type="entry name" value="Adenine nucleotide alpha hydrolases-like"/>
    <property type="match status" value="1"/>
</dbReference>
<keyword id="KW-0067">ATP-binding</keyword>
<keyword id="KW-0963">Cytoplasm</keyword>
<keyword id="KW-1015">Disulfide bond</keyword>
<keyword id="KW-0547">Nucleotide-binding</keyword>
<keyword id="KW-1185">Reference proteome</keyword>
<keyword id="KW-0694">RNA-binding</keyword>
<keyword id="KW-0808">Transferase</keyword>
<keyword id="KW-0819">tRNA processing</keyword>
<keyword id="KW-0820">tRNA-binding</keyword>
<evidence type="ECO:0000255" key="1">
    <source>
        <dbReference type="HAMAP-Rule" id="MF_00144"/>
    </source>
</evidence>
<comment type="function">
    <text evidence="1">Catalyzes the 2-thiolation of uridine at the wobble position (U34) of tRNA, leading to the formation of s(2)U34.</text>
</comment>
<comment type="catalytic activity">
    <reaction evidence="1">
        <text>S-sulfanyl-L-cysteinyl-[protein] + uridine(34) in tRNA + AH2 + ATP = 2-thiouridine(34) in tRNA + L-cysteinyl-[protein] + A + AMP + diphosphate + H(+)</text>
        <dbReference type="Rhea" id="RHEA:47032"/>
        <dbReference type="Rhea" id="RHEA-COMP:10131"/>
        <dbReference type="Rhea" id="RHEA-COMP:11726"/>
        <dbReference type="Rhea" id="RHEA-COMP:11727"/>
        <dbReference type="Rhea" id="RHEA-COMP:11728"/>
        <dbReference type="ChEBI" id="CHEBI:13193"/>
        <dbReference type="ChEBI" id="CHEBI:15378"/>
        <dbReference type="ChEBI" id="CHEBI:17499"/>
        <dbReference type="ChEBI" id="CHEBI:29950"/>
        <dbReference type="ChEBI" id="CHEBI:30616"/>
        <dbReference type="ChEBI" id="CHEBI:33019"/>
        <dbReference type="ChEBI" id="CHEBI:61963"/>
        <dbReference type="ChEBI" id="CHEBI:65315"/>
        <dbReference type="ChEBI" id="CHEBI:87170"/>
        <dbReference type="ChEBI" id="CHEBI:456215"/>
        <dbReference type="EC" id="2.8.1.13"/>
    </reaction>
</comment>
<comment type="subcellular location">
    <subcellularLocation>
        <location evidence="1">Cytoplasm</location>
    </subcellularLocation>
</comment>
<comment type="similarity">
    <text evidence="1">Belongs to the MnmA/TRMU family.</text>
</comment>
<gene>
    <name evidence="1" type="primary">mnmA</name>
    <name type="ordered locus">Sala_2030</name>
</gene>
<feature type="chain" id="PRO_0000349805" description="tRNA-specific 2-thiouridylase MnmA">
    <location>
        <begin position="1"/>
        <end position="382"/>
    </location>
</feature>
<feature type="region of interest" description="Interaction with tRNA" evidence="1">
    <location>
        <begin position="174"/>
        <end position="176"/>
    </location>
</feature>
<feature type="active site" description="Nucleophile" evidence="1">
    <location>
        <position position="128"/>
    </location>
</feature>
<feature type="active site" description="Cysteine persulfide intermediate" evidence="1">
    <location>
        <position position="224"/>
    </location>
</feature>
<feature type="binding site" evidence="1">
    <location>
        <begin position="34"/>
        <end position="41"/>
    </location>
    <ligand>
        <name>ATP</name>
        <dbReference type="ChEBI" id="CHEBI:30616"/>
    </ligand>
</feature>
<feature type="binding site" evidence="1">
    <location>
        <position position="60"/>
    </location>
    <ligand>
        <name>ATP</name>
        <dbReference type="ChEBI" id="CHEBI:30616"/>
    </ligand>
</feature>
<feature type="binding site" evidence="1">
    <location>
        <position position="152"/>
    </location>
    <ligand>
        <name>ATP</name>
        <dbReference type="ChEBI" id="CHEBI:30616"/>
    </ligand>
</feature>
<feature type="site" description="Interaction with tRNA" evidence="1">
    <location>
        <position position="153"/>
    </location>
</feature>
<feature type="site" description="Interaction with tRNA" evidence="1">
    <location>
        <position position="356"/>
    </location>
</feature>
<feature type="disulfide bond" description="Alternate" evidence="1">
    <location>
        <begin position="128"/>
        <end position="224"/>
    </location>
</feature>
<organism>
    <name type="scientific">Sphingopyxis alaskensis (strain DSM 13593 / LMG 18877 / RB2256)</name>
    <name type="common">Sphingomonas alaskensis</name>
    <dbReference type="NCBI Taxonomy" id="317655"/>
    <lineage>
        <taxon>Bacteria</taxon>
        <taxon>Pseudomonadati</taxon>
        <taxon>Pseudomonadota</taxon>
        <taxon>Alphaproteobacteria</taxon>
        <taxon>Sphingomonadales</taxon>
        <taxon>Sphingomonadaceae</taxon>
        <taxon>Sphingopyxis</taxon>
    </lineage>
</organism>
<sequence>MAPTMIATLSSPVGLAQADFQLAGPMKDRRIVVAMSGGVDSSVVAALAARSGAEVIGVTLQLYDHGAKAKRVGACCAGQDIRDARAVADRLGFVHHVHDHESRFRDTVIDQFADEYLAGRTPIPCVRCNMGVKFTDLFQLARELGADCLATGHYVRRVMGPDGAEMHRAVDPARDQSYFLFATTQEQLDFLRFPLGGLEKNVVREIARDLGLGVAGKPDSQDICFVPDGDYASLVRKLRPEAEDQGDIVHVDGTVLGAHKGLIHYTVGQRRGIDIGGQAEPLYVVRLNAATKQVIVGPRRALAVSGARLGDANWLADVEGRDVLAKVRSMAKPVPARVTANRLRFLSPEYGVAPGQAAVLYDAADKSRVLGGGWIEETFTAE</sequence>
<proteinExistence type="inferred from homology"/>
<reference key="1">
    <citation type="journal article" date="2009" name="Proc. Natl. Acad. Sci. U.S.A.">
        <title>The genomic basis of trophic strategy in marine bacteria.</title>
        <authorList>
            <person name="Lauro F.M."/>
            <person name="McDougald D."/>
            <person name="Thomas T."/>
            <person name="Williams T.J."/>
            <person name="Egan S."/>
            <person name="Rice S."/>
            <person name="DeMaere M.Z."/>
            <person name="Ting L."/>
            <person name="Ertan H."/>
            <person name="Johnson J."/>
            <person name="Ferriera S."/>
            <person name="Lapidus A."/>
            <person name="Anderson I."/>
            <person name="Kyrpides N."/>
            <person name="Munk A.C."/>
            <person name="Detter C."/>
            <person name="Han C.S."/>
            <person name="Brown M.V."/>
            <person name="Robb F.T."/>
            <person name="Kjelleberg S."/>
            <person name="Cavicchioli R."/>
        </authorList>
    </citation>
    <scope>NUCLEOTIDE SEQUENCE [LARGE SCALE GENOMIC DNA]</scope>
    <source>
        <strain>DSM 13593 / LMG 18877 / RB2256</strain>
    </source>
</reference>
<accession>Q1GRI1</accession>
<protein>
    <recommendedName>
        <fullName evidence="1">tRNA-specific 2-thiouridylase MnmA</fullName>
        <ecNumber evidence="1">2.8.1.13</ecNumber>
    </recommendedName>
</protein>
<name>MNMA_SPHAL</name>